<protein>
    <recommendedName>
        <fullName evidence="1">Small ribosomal subunit protein uS9</fullName>
    </recommendedName>
    <alternativeName>
        <fullName evidence="2">30S ribosomal protein S9</fullName>
    </alternativeName>
</protein>
<organism>
    <name type="scientific">Coxiella burnetii (strain RSA 493 / Nine Mile phase I)</name>
    <dbReference type="NCBI Taxonomy" id="227377"/>
    <lineage>
        <taxon>Bacteria</taxon>
        <taxon>Pseudomonadati</taxon>
        <taxon>Pseudomonadota</taxon>
        <taxon>Gammaproteobacteria</taxon>
        <taxon>Legionellales</taxon>
        <taxon>Coxiellaceae</taxon>
        <taxon>Coxiella</taxon>
    </lineage>
</organism>
<gene>
    <name evidence="1" type="primary">rpsI</name>
    <name type="ordered locus">CBU_1748</name>
</gene>
<keyword id="KW-1185">Reference proteome</keyword>
<keyword id="KW-0687">Ribonucleoprotein</keyword>
<keyword id="KW-0689">Ribosomal protein</keyword>
<accession>Q83AX9</accession>
<evidence type="ECO:0000255" key="1">
    <source>
        <dbReference type="HAMAP-Rule" id="MF_00532"/>
    </source>
</evidence>
<evidence type="ECO:0000305" key="2"/>
<dbReference type="EMBL" id="AE016828">
    <property type="protein sequence ID" value="AAO91242.1"/>
    <property type="molecule type" value="Genomic_DNA"/>
</dbReference>
<dbReference type="RefSeq" id="NP_820728.1">
    <property type="nucleotide sequence ID" value="NC_002971.4"/>
</dbReference>
<dbReference type="RefSeq" id="WP_005773029.1">
    <property type="nucleotide sequence ID" value="NZ_CDBG01000001.1"/>
</dbReference>
<dbReference type="SMR" id="Q83AX9"/>
<dbReference type="STRING" id="227377.CBU_1748"/>
<dbReference type="DNASU" id="1209659"/>
<dbReference type="EnsemblBacteria" id="AAO91242">
    <property type="protein sequence ID" value="AAO91242"/>
    <property type="gene ID" value="CBU_1748"/>
</dbReference>
<dbReference type="GeneID" id="1209659"/>
<dbReference type="KEGG" id="cbu:CBU_1748"/>
<dbReference type="PATRIC" id="fig|227377.7.peg.1737"/>
<dbReference type="eggNOG" id="COG0103">
    <property type="taxonomic scope" value="Bacteria"/>
</dbReference>
<dbReference type="HOGENOM" id="CLU_046483_2_1_6"/>
<dbReference type="OrthoDB" id="9803965at2"/>
<dbReference type="Proteomes" id="UP000002671">
    <property type="component" value="Chromosome"/>
</dbReference>
<dbReference type="GO" id="GO:0022627">
    <property type="term" value="C:cytosolic small ribosomal subunit"/>
    <property type="evidence" value="ECO:0000318"/>
    <property type="project" value="GO_Central"/>
</dbReference>
<dbReference type="GO" id="GO:0003723">
    <property type="term" value="F:RNA binding"/>
    <property type="evidence" value="ECO:0000318"/>
    <property type="project" value="GO_Central"/>
</dbReference>
<dbReference type="GO" id="GO:0003735">
    <property type="term" value="F:structural constituent of ribosome"/>
    <property type="evidence" value="ECO:0000318"/>
    <property type="project" value="GO_Central"/>
</dbReference>
<dbReference type="GO" id="GO:0006412">
    <property type="term" value="P:translation"/>
    <property type="evidence" value="ECO:0007669"/>
    <property type="project" value="UniProtKB-UniRule"/>
</dbReference>
<dbReference type="FunFam" id="3.30.230.10:FF:000001">
    <property type="entry name" value="30S ribosomal protein S9"/>
    <property type="match status" value="1"/>
</dbReference>
<dbReference type="Gene3D" id="3.30.230.10">
    <property type="match status" value="1"/>
</dbReference>
<dbReference type="HAMAP" id="MF_00532_B">
    <property type="entry name" value="Ribosomal_uS9_B"/>
    <property type="match status" value="1"/>
</dbReference>
<dbReference type="InterPro" id="IPR020568">
    <property type="entry name" value="Ribosomal_Su5_D2-typ_SF"/>
</dbReference>
<dbReference type="InterPro" id="IPR000754">
    <property type="entry name" value="Ribosomal_uS9"/>
</dbReference>
<dbReference type="InterPro" id="IPR023035">
    <property type="entry name" value="Ribosomal_uS9_bac/plastid"/>
</dbReference>
<dbReference type="InterPro" id="IPR020574">
    <property type="entry name" value="Ribosomal_uS9_CS"/>
</dbReference>
<dbReference type="InterPro" id="IPR014721">
    <property type="entry name" value="Ribsml_uS5_D2-typ_fold_subgr"/>
</dbReference>
<dbReference type="NCBIfam" id="NF001099">
    <property type="entry name" value="PRK00132.1"/>
    <property type="match status" value="1"/>
</dbReference>
<dbReference type="PANTHER" id="PTHR21569">
    <property type="entry name" value="RIBOSOMAL PROTEIN S9"/>
    <property type="match status" value="1"/>
</dbReference>
<dbReference type="PANTHER" id="PTHR21569:SF1">
    <property type="entry name" value="SMALL RIBOSOMAL SUBUNIT PROTEIN US9M"/>
    <property type="match status" value="1"/>
</dbReference>
<dbReference type="Pfam" id="PF00380">
    <property type="entry name" value="Ribosomal_S9"/>
    <property type="match status" value="1"/>
</dbReference>
<dbReference type="SUPFAM" id="SSF54211">
    <property type="entry name" value="Ribosomal protein S5 domain 2-like"/>
    <property type="match status" value="1"/>
</dbReference>
<dbReference type="PROSITE" id="PS00360">
    <property type="entry name" value="RIBOSOMAL_S9"/>
    <property type="match status" value="1"/>
</dbReference>
<sequence>MAQAAKKQNLGTGRRKTSSARVFLRSGTGQIIINGLPLDEYFGRETARMVVRQPLVKLDVQSRFDVYATVQGGGDSGQAGAIRHGITRALIQYDEEGGEGGTWRSTLRKAGFVTRDPRMVERKKVGLHGARRGTQFSKR</sequence>
<feature type="chain" id="PRO_0000111352" description="Small ribosomal subunit protein uS9">
    <location>
        <begin position="1"/>
        <end position="139"/>
    </location>
</feature>
<comment type="similarity">
    <text evidence="1">Belongs to the universal ribosomal protein uS9 family.</text>
</comment>
<name>RS9_COXBU</name>
<proteinExistence type="inferred from homology"/>
<reference key="1">
    <citation type="journal article" date="2003" name="Proc. Natl. Acad. Sci. U.S.A.">
        <title>Complete genome sequence of the Q-fever pathogen, Coxiella burnetii.</title>
        <authorList>
            <person name="Seshadri R."/>
            <person name="Paulsen I.T."/>
            <person name="Eisen J.A."/>
            <person name="Read T.D."/>
            <person name="Nelson K.E."/>
            <person name="Nelson W.C."/>
            <person name="Ward N.L."/>
            <person name="Tettelin H."/>
            <person name="Davidsen T.M."/>
            <person name="Beanan M.J."/>
            <person name="DeBoy R.T."/>
            <person name="Daugherty S.C."/>
            <person name="Brinkac L.M."/>
            <person name="Madupu R."/>
            <person name="Dodson R.J."/>
            <person name="Khouri H.M."/>
            <person name="Lee K.H."/>
            <person name="Carty H.A."/>
            <person name="Scanlan D."/>
            <person name="Heinzen R.A."/>
            <person name="Thompson H.A."/>
            <person name="Samuel J.E."/>
            <person name="Fraser C.M."/>
            <person name="Heidelberg J.F."/>
        </authorList>
    </citation>
    <scope>NUCLEOTIDE SEQUENCE [LARGE SCALE GENOMIC DNA]</scope>
    <source>
        <strain>RSA 493 / Nine Mile phase I</strain>
    </source>
</reference>